<comment type="function">
    <text evidence="1 2 3">Serine/threonine protein phosphatase which is involved in the dephosphorylation of the large subunit of RNA polymerase II. Is required in late G1 for normal G1 cyclin expression, bud initiation and expression of certain genes that are periodically expressed during late G1 (By similarity). Plays a role during hyphal growth through the regulation of cell wall biogenesis, osmosensing and protein translation. Involved in virulence in a mouse systemic infection model.</text>
</comment>
<comment type="catalytic activity">
    <reaction>
        <text>O-phospho-L-seryl-[protein] + H2O = L-seryl-[protein] + phosphate</text>
        <dbReference type="Rhea" id="RHEA:20629"/>
        <dbReference type="Rhea" id="RHEA-COMP:9863"/>
        <dbReference type="Rhea" id="RHEA-COMP:11604"/>
        <dbReference type="ChEBI" id="CHEBI:15377"/>
        <dbReference type="ChEBI" id="CHEBI:29999"/>
        <dbReference type="ChEBI" id="CHEBI:43474"/>
        <dbReference type="ChEBI" id="CHEBI:83421"/>
        <dbReference type="EC" id="3.1.3.16"/>
    </reaction>
</comment>
<comment type="catalytic activity">
    <reaction>
        <text>O-phospho-L-threonyl-[protein] + H2O = L-threonyl-[protein] + phosphate</text>
        <dbReference type="Rhea" id="RHEA:47004"/>
        <dbReference type="Rhea" id="RHEA-COMP:11060"/>
        <dbReference type="Rhea" id="RHEA-COMP:11605"/>
        <dbReference type="ChEBI" id="CHEBI:15377"/>
        <dbReference type="ChEBI" id="CHEBI:30013"/>
        <dbReference type="ChEBI" id="CHEBI:43474"/>
        <dbReference type="ChEBI" id="CHEBI:61977"/>
        <dbReference type="EC" id="3.1.3.16"/>
    </reaction>
</comment>
<comment type="cofactor">
    <cofactor evidence="1">
        <name>Mn(2+)</name>
        <dbReference type="ChEBI" id="CHEBI:29035"/>
    </cofactor>
    <text evidence="1">Binds 2 manganese ions per subunit.</text>
</comment>
<comment type="subunit">
    <text evidence="3">Interacts with MDS3.</text>
</comment>
<comment type="subcellular location">
    <subcellularLocation>
        <location evidence="1">Cytoplasm</location>
    </subcellularLocation>
</comment>
<comment type="disruption phenotype">
    <text evidence="2">Causes growth retardation and leads to significant reduction in virulence.</text>
</comment>
<comment type="similarity">
    <text evidence="4">Belongs to the PPP phosphatase family. PP-6 (PP-V) subfamily.</text>
</comment>
<proteinExistence type="evidence at protein level"/>
<organism>
    <name type="scientific">Candida albicans (strain SC5314 / ATCC MYA-2876)</name>
    <name type="common">Yeast</name>
    <dbReference type="NCBI Taxonomy" id="237561"/>
    <lineage>
        <taxon>Eukaryota</taxon>
        <taxon>Fungi</taxon>
        <taxon>Dikarya</taxon>
        <taxon>Ascomycota</taxon>
        <taxon>Saccharomycotina</taxon>
        <taxon>Pichiomycetes</taxon>
        <taxon>Debaryomycetaceae</taxon>
        <taxon>Candida/Lodderomyces clade</taxon>
        <taxon>Candida</taxon>
    </lineage>
</organism>
<keyword id="KW-0131">Cell cycle</keyword>
<keyword id="KW-0132">Cell division</keyword>
<keyword id="KW-0963">Cytoplasm</keyword>
<keyword id="KW-0378">Hydrolase</keyword>
<keyword id="KW-0464">Manganese</keyword>
<keyword id="KW-0479">Metal-binding</keyword>
<keyword id="KW-0498">Mitosis</keyword>
<keyword id="KW-0904">Protein phosphatase</keyword>
<keyword id="KW-1185">Reference proteome</keyword>
<keyword id="KW-0843">Virulence</keyword>
<gene>
    <name type="primary">SIT4</name>
    <name type="ordered locus">CAALFM_C104380WA</name>
    <name type="ORF">CaO19.12667</name>
    <name type="ORF">CaO19.5200</name>
</gene>
<sequence>MGERGPDQWLEQIKNCISLSESDMKQLCELVKELLMEESNIQPVQSPVTVCGDIHGQFHDLLELFRTAGGLPSDDNQTNFIFLGDYVDRGYFSLETFTLLMVLKVKYPHRITLVRGNHESRQITQVYGFYEECLTKYGSTTVWKYCCQVFDFLTLAAIIDGKILCVHGGLSPEIRMLDQIRVLSRAQEVPHEGGFCDLVWSDPDNIDTWAVSPRGAGWLFGSKVSREFNHINNLQLIARAHQLVMEGFRYHFKEKDVVTVWSAPNYCYRCGNVASVMQVDEDLEPNFKIFSAVQDGDLSVKNNANKQQRSDYFL</sequence>
<feature type="chain" id="PRO_0000422107" description="Serine/threonine-protein phosphatase SIT4">
    <location>
        <begin position="1"/>
        <end position="314"/>
    </location>
</feature>
<feature type="active site" description="Proton donor" evidence="1">
    <location>
        <position position="118"/>
    </location>
</feature>
<feature type="binding site" evidence="1">
    <location>
        <position position="53"/>
    </location>
    <ligand>
        <name>Mn(2+)</name>
        <dbReference type="ChEBI" id="CHEBI:29035"/>
        <label>1</label>
    </ligand>
</feature>
<feature type="binding site" evidence="1">
    <location>
        <position position="55"/>
    </location>
    <ligand>
        <name>Mn(2+)</name>
        <dbReference type="ChEBI" id="CHEBI:29035"/>
        <label>1</label>
    </ligand>
</feature>
<feature type="binding site" evidence="1">
    <location>
        <position position="85"/>
    </location>
    <ligand>
        <name>Mn(2+)</name>
        <dbReference type="ChEBI" id="CHEBI:29035"/>
        <label>1</label>
    </ligand>
</feature>
<feature type="binding site" evidence="1">
    <location>
        <position position="85"/>
    </location>
    <ligand>
        <name>Mn(2+)</name>
        <dbReference type="ChEBI" id="CHEBI:29035"/>
        <label>2</label>
    </ligand>
</feature>
<feature type="binding site" evidence="1">
    <location>
        <position position="117"/>
    </location>
    <ligand>
        <name>Mn(2+)</name>
        <dbReference type="ChEBI" id="CHEBI:29035"/>
        <label>2</label>
    </ligand>
</feature>
<feature type="binding site" evidence="1">
    <location>
        <position position="167"/>
    </location>
    <ligand>
        <name>Mn(2+)</name>
        <dbReference type="ChEBI" id="CHEBI:29035"/>
        <label>2</label>
    </ligand>
</feature>
<feature type="binding site" evidence="1">
    <location>
        <position position="241"/>
    </location>
    <ligand>
        <name>Mn(2+)</name>
        <dbReference type="ChEBI" id="CHEBI:29035"/>
        <label>2</label>
    </ligand>
</feature>
<accession>Q59KY8</accession>
<accession>A0A1D8PD98</accession>
<name>SIT4_CANAL</name>
<evidence type="ECO:0000250" key="1"/>
<evidence type="ECO:0000269" key="2">
    <source>
    </source>
</evidence>
<evidence type="ECO:0000269" key="3">
    <source>
    </source>
</evidence>
<evidence type="ECO:0000305" key="4"/>
<protein>
    <recommendedName>
        <fullName>Serine/threonine-protein phosphatase SIT4</fullName>
        <ecNumber>3.1.3.16</ecNumber>
    </recommendedName>
</protein>
<dbReference type="EC" id="3.1.3.16"/>
<dbReference type="EMBL" id="CP017623">
    <property type="protein sequence ID" value="AOW26112.1"/>
    <property type="molecule type" value="Genomic_DNA"/>
</dbReference>
<dbReference type="RefSeq" id="XP_710408.1">
    <property type="nucleotide sequence ID" value="XM_705316.2"/>
</dbReference>
<dbReference type="SMR" id="Q59KY8"/>
<dbReference type="BioGRID" id="1231075">
    <property type="interactions" value="2"/>
</dbReference>
<dbReference type="FunCoup" id="Q59KY8">
    <property type="interactions" value="973"/>
</dbReference>
<dbReference type="STRING" id="237561.Q59KY8"/>
<dbReference type="EnsemblFungi" id="C1_04380W_A-T">
    <property type="protein sequence ID" value="C1_04380W_A-T-p1"/>
    <property type="gene ID" value="C1_04380W_A"/>
</dbReference>
<dbReference type="GeneID" id="3647993"/>
<dbReference type="KEGG" id="cal:CAALFM_C104380WA"/>
<dbReference type="CGD" id="CAL0000187173">
    <property type="gene designation" value="SIT4"/>
</dbReference>
<dbReference type="VEuPathDB" id="FungiDB:C1_04380W_A"/>
<dbReference type="eggNOG" id="KOG0373">
    <property type="taxonomic scope" value="Eukaryota"/>
</dbReference>
<dbReference type="HOGENOM" id="CLU_004962_0_5_1"/>
<dbReference type="InParanoid" id="Q59KY8"/>
<dbReference type="OMA" id="MCLKVKY"/>
<dbReference type="OrthoDB" id="1930084at2759"/>
<dbReference type="PHI-base" id="PHI:378"/>
<dbReference type="PRO" id="PR:Q59KY8"/>
<dbReference type="Proteomes" id="UP000000559">
    <property type="component" value="Chromosome 1"/>
</dbReference>
<dbReference type="GO" id="GO:0000785">
    <property type="term" value="C:chromatin"/>
    <property type="evidence" value="ECO:0007669"/>
    <property type="project" value="EnsemblFungi"/>
</dbReference>
<dbReference type="GO" id="GO:0005737">
    <property type="term" value="C:cytoplasm"/>
    <property type="evidence" value="ECO:0000318"/>
    <property type="project" value="GO_Central"/>
</dbReference>
<dbReference type="GO" id="GO:0000159">
    <property type="term" value="C:protein phosphatase type 2A complex"/>
    <property type="evidence" value="ECO:0007669"/>
    <property type="project" value="EnsemblFungi"/>
</dbReference>
<dbReference type="GO" id="GO:0046872">
    <property type="term" value="F:metal ion binding"/>
    <property type="evidence" value="ECO:0007669"/>
    <property type="project" value="UniProtKB-KW"/>
</dbReference>
<dbReference type="GO" id="GO:0004722">
    <property type="term" value="F:protein serine/threonine phosphatase activity"/>
    <property type="evidence" value="ECO:0000316"/>
    <property type="project" value="CGD"/>
</dbReference>
<dbReference type="GO" id="GO:0051301">
    <property type="term" value="P:cell division"/>
    <property type="evidence" value="ECO:0007669"/>
    <property type="project" value="UniProtKB-KW"/>
</dbReference>
<dbReference type="GO" id="GO:0036244">
    <property type="term" value="P:cellular response to neutral pH"/>
    <property type="evidence" value="ECO:0000315"/>
    <property type="project" value="CGD"/>
</dbReference>
<dbReference type="GO" id="GO:0034599">
    <property type="term" value="P:cellular response to oxidative stress"/>
    <property type="evidence" value="ECO:0007669"/>
    <property type="project" value="EnsemblFungi"/>
</dbReference>
<dbReference type="GO" id="GO:0006281">
    <property type="term" value="P:DNA repair"/>
    <property type="evidence" value="ECO:0007669"/>
    <property type="project" value="EnsemblFungi"/>
</dbReference>
<dbReference type="GO" id="GO:0030447">
    <property type="term" value="P:filamentous growth"/>
    <property type="evidence" value="ECO:0000315"/>
    <property type="project" value="CGD"/>
</dbReference>
<dbReference type="GO" id="GO:0036180">
    <property type="term" value="P:filamentous growth of a population of unicellular organisms in response to biotic stimulus"/>
    <property type="evidence" value="ECO:0000315"/>
    <property type="project" value="CGD"/>
</dbReference>
<dbReference type="GO" id="GO:0036171">
    <property type="term" value="P:filamentous growth of a population of unicellular organisms in response to chemical stimulus"/>
    <property type="evidence" value="ECO:0000315"/>
    <property type="project" value="CGD"/>
</dbReference>
<dbReference type="GO" id="GO:0036168">
    <property type="term" value="P:filamentous growth of a population of unicellular organisms in response to heat"/>
    <property type="evidence" value="ECO:0000315"/>
    <property type="project" value="CGD"/>
</dbReference>
<dbReference type="GO" id="GO:0036178">
    <property type="term" value="P:filamentous growth of a population of unicellular organisms in response to neutral pH"/>
    <property type="evidence" value="ECO:0000315"/>
    <property type="project" value="CGD"/>
</dbReference>
<dbReference type="GO" id="GO:0036170">
    <property type="term" value="P:filamentous growth of a population of unicellular organisms in response to starvation"/>
    <property type="evidence" value="ECO:0000315"/>
    <property type="project" value="CGD"/>
</dbReference>
<dbReference type="GO" id="GO:0000082">
    <property type="term" value="P:G1/S transition of mitotic cell cycle"/>
    <property type="evidence" value="ECO:0000318"/>
    <property type="project" value="GO_Central"/>
</dbReference>
<dbReference type="GO" id="GO:0035556">
    <property type="term" value="P:intracellular signal transduction"/>
    <property type="evidence" value="ECO:0007669"/>
    <property type="project" value="EnsemblFungi"/>
</dbReference>
<dbReference type="GO" id="GO:2001211">
    <property type="term" value="P:negative regulation of isopentenyl diphosphate biosynthetic process, mevalonate pathway"/>
    <property type="evidence" value="ECO:0007669"/>
    <property type="project" value="EnsemblFungi"/>
</dbReference>
<dbReference type="GO" id="GO:1900439">
    <property type="term" value="P:positive regulation of filamentous growth of a population of unicellular organisms in response to chemical stimulus"/>
    <property type="evidence" value="ECO:0000315"/>
    <property type="project" value="CGD"/>
</dbReference>
<dbReference type="GO" id="GO:1900442">
    <property type="term" value="P:positive regulation of filamentous growth of a population of unicellular organisms in response to neutral pH"/>
    <property type="evidence" value="ECO:0000315"/>
    <property type="project" value="CGD"/>
</dbReference>
<dbReference type="GO" id="GO:1900436">
    <property type="term" value="P:positive regulation of filamentous growth of a population of unicellular organisms in response to starvation"/>
    <property type="evidence" value="ECO:0000315"/>
    <property type="project" value="CGD"/>
</dbReference>
<dbReference type="GO" id="GO:0032956">
    <property type="term" value="P:regulation of actin cytoskeleton organization"/>
    <property type="evidence" value="ECO:0007669"/>
    <property type="project" value="EnsemblFungi"/>
</dbReference>
<dbReference type="GO" id="GO:0060237">
    <property type="term" value="P:regulation of fungal-type cell wall organization"/>
    <property type="evidence" value="ECO:0007669"/>
    <property type="project" value="EnsemblFungi"/>
</dbReference>
<dbReference type="GO" id="GO:1903432">
    <property type="term" value="P:regulation of TORC1 signaling"/>
    <property type="evidence" value="ECO:0007669"/>
    <property type="project" value="EnsemblFungi"/>
</dbReference>
<dbReference type="GO" id="GO:0002098">
    <property type="term" value="P:tRNA wobble uridine modification"/>
    <property type="evidence" value="ECO:0007669"/>
    <property type="project" value="EnsemblFungi"/>
</dbReference>
<dbReference type="CDD" id="cd07415">
    <property type="entry name" value="MPP_PP2A_PP4_PP6"/>
    <property type="match status" value="1"/>
</dbReference>
<dbReference type="FunFam" id="3.60.21.10:FF:000005">
    <property type="entry name" value="Serine/threonine-protein phosphatase"/>
    <property type="match status" value="1"/>
</dbReference>
<dbReference type="Gene3D" id="3.60.21.10">
    <property type="match status" value="1"/>
</dbReference>
<dbReference type="InterPro" id="IPR004843">
    <property type="entry name" value="Calcineurin-like_PHP_ApaH"/>
</dbReference>
<dbReference type="InterPro" id="IPR029052">
    <property type="entry name" value="Metallo-depent_PP-like"/>
</dbReference>
<dbReference type="InterPro" id="IPR047129">
    <property type="entry name" value="PPA2-like"/>
</dbReference>
<dbReference type="InterPro" id="IPR006186">
    <property type="entry name" value="Ser/Thr-sp_prot-phosphatase"/>
</dbReference>
<dbReference type="PANTHER" id="PTHR45619">
    <property type="entry name" value="SERINE/THREONINE-PROTEIN PHOSPHATASE PP2A-RELATED"/>
    <property type="match status" value="1"/>
</dbReference>
<dbReference type="Pfam" id="PF00149">
    <property type="entry name" value="Metallophos"/>
    <property type="match status" value="1"/>
</dbReference>
<dbReference type="PRINTS" id="PR00114">
    <property type="entry name" value="STPHPHTASE"/>
</dbReference>
<dbReference type="SMART" id="SM00156">
    <property type="entry name" value="PP2Ac"/>
    <property type="match status" value="1"/>
</dbReference>
<dbReference type="SUPFAM" id="SSF56300">
    <property type="entry name" value="Metallo-dependent phosphatases"/>
    <property type="match status" value="1"/>
</dbReference>
<dbReference type="PROSITE" id="PS00125">
    <property type="entry name" value="SER_THR_PHOSPHATASE"/>
    <property type="match status" value="1"/>
</dbReference>
<reference key="1">
    <citation type="journal article" date="2004" name="Proc. Natl. Acad. Sci. U.S.A.">
        <title>The diploid genome sequence of Candida albicans.</title>
        <authorList>
            <person name="Jones T."/>
            <person name="Federspiel N.A."/>
            <person name="Chibana H."/>
            <person name="Dungan J."/>
            <person name="Kalman S."/>
            <person name="Magee B.B."/>
            <person name="Newport G."/>
            <person name="Thorstenson Y.R."/>
            <person name="Agabian N."/>
            <person name="Magee P.T."/>
            <person name="Davis R.W."/>
            <person name="Scherer S."/>
        </authorList>
    </citation>
    <scope>NUCLEOTIDE SEQUENCE [LARGE SCALE GENOMIC DNA]</scope>
    <source>
        <strain>SC5314 / ATCC MYA-2876</strain>
    </source>
</reference>
<reference key="2">
    <citation type="journal article" date="2007" name="Genome Biol.">
        <title>Assembly of the Candida albicans genome into sixteen supercontigs aligned on the eight chromosomes.</title>
        <authorList>
            <person name="van het Hoog M."/>
            <person name="Rast T.J."/>
            <person name="Martchenko M."/>
            <person name="Grindle S."/>
            <person name="Dignard D."/>
            <person name="Hogues H."/>
            <person name="Cuomo C."/>
            <person name="Berriman M."/>
            <person name="Scherer S."/>
            <person name="Magee B.B."/>
            <person name="Whiteway M."/>
            <person name="Chibana H."/>
            <person name="Nantel A."/>
            <person name="Magee P.T."/>
        </authorList>
    </citation>
    <scope>GENOME REANNOTATION</scope>
    <source>
        <strain>SC5314 / ATCC MYA-2876</strain>
    </source>
</reference>
<reference key="3">
    <citation type="journal article" date="2013" name="Genome Biol.">
        <title>Assembly of a phased diploid Candida albicans genome facilitates allele-specific measurements and provides a simple model for repeat and indel structure.</title>
        <authorList>
            <person name="Muzzey D."/>
            <person name="Schwartz K."/>
            <person name="Weissman J.S."/>
            <person name="Sherlock G."/>
        </authorList>
    </citation>
    <scope>NUCLEOTIDE SEQUENCE [LARGE SCALE GENOMIC DNA]</scope>
    <scope>GENOME REANNOTATION</scope>
    <source>
        <strain>SC5314 / ATCC MYA-2876</strain>
    </source>
</reference>
<reference key="4">
    <citation type="journal article" date="2004" name="Mol. Microbiol.">
        <title>The serine/threonine protein phosphatase SIT4 modulates yeast-to-hypha morphogenesis and virulence in Candida albicans.</title>
        <authorList>
            <person name="Lee C.M."/>
            <person name="Nantel A."/>
            <person name="Jiang L."/>
            <person name="Whiteway M."/>
            <person name="Shen S.H."/>
        </authorList>
    </citation>
    <scope>DISRUPTION PHENOTYPE</scope>
    <scope>FUNCTION</scope>
</reference>
<reference key="5">
    <citation type="journal article" date="2010" name="Mol. Cell. Biol.">
        <title>Mds3 regulates morphogenesis in Candida albicans through the TOR pathway.</title>
        <authorList>
            <person name="Zacchi L.F."/>
            <person name="Gomez-Raja J."/>
            <person name="Davis D.A."/>
        </authorList>
    </citation>
    <scope>FUNCTION</scope>
    <scope>INTERACTION WITH MDS3</scope>
</reference>